<name>T23O_DROAN</name>
<evidence type="ECO:0000255" key="1">
    <source>
        <dbReference type="HAMAP-Rule" id="MF_03020"/>
    </source>
</evidence>
<evidence type="ECO:0000305" key="2"/>
<comment type="function">
    <text evidence="1">Heme-dependent dioxygenase that catalyzes the oxidative cleavage of the L-tryptophan (L-Trp) pyrrole ring and converts L-tryptophan to N-formyl-L-kynurenine. Catalyzes the oxidative cleavage of the indole moiety.</text>
</comment>
<comment type="catalytic activity">
    <reaction evidence="1">
        <text>L-tryptophan + O2 = N-formyl-L-kynurenine</text>
        <dbReference type="Rhea" id="RHEA:24536"/>
        <dbReference type="ChEBI" id="CHEBI:15379"/>
        <dbReference type="ChEBI" id="CHEBI:57912"/>
        <dbReference type="ChEBI" id="CHEBI:58629"/>
        <dbReference type="EC" id="1.13.11.11"/>
    </reaction>
</comment>
<comment type="cofactor">
    <cofactor evidence="1">
        <name>heme</name>
        <dbReference type="ChEBI" id="CHEBI:30413"/>
    </cofactor>
    <text evidence="1">Binds 1 heme group per subunit.</text>
</comment>
<comment type="pathway">
    <text evidence="1">Amino-acid degradation; L-tryptophan degradation via kynurenine pathway; L-kynurenine from L-tryptophan: step 1/2.</text>
</comment>
<comment type="pathway">
    <text evidence="1">Pigment biosynthesis; ommochrome biosynthesis.</text>
</comment>
<comment type="subunit">
    <text evidence="1">Homotetramer. Dimer of dimers.</text>
</comment>
<comment type="similarity">
    <text evidence="1">Belongs to the tryptophan 2,3-dioxygenase family.</text>
</comment>
<feature type="chain" id="PRO_0000360874" description="Tryptophan 2,3-dioxygenase">
    <location>
        <begin position="1"/>
        <end position="380"/>
    </location>
</feature>
<feature type="binding site" evidence="1">
    <location>
        <begin position="57"/>
        <end position="61"/>
    </location>
    <ligand>
        <name>substrate</name>
    </ligand>
</feature>
<feature type="binding site" evidence="1">
    <location>
        <position position="128"/>
    </location>
    <ligand>
        <name>substrate</name>
    </ligand>
</feature>
<feature type="binding site" description="axial binding residue" evidence="1">
    <location>
        <position position="313"/>
    </location>
    <ligand>
        <name>heme</name>
        <dbReference type="ChEBI" id="CHEBI:30413"/>
    </ligand>
    <ligandPart>
        <name>Fe</name>
        <dbReference type="ChEBI" id="CHEBI:18248"/>
    </ligandPart>
</feature>
<feature type="binding site" evidence="1">
    <location>
        <position position="328"/>
    </location>
    <ligand>
        <name>substrate</name>
    </ligand>
</feature>
<feature type="sequence conflict" description="In Ref. 1; AAC24239." evidence="2" ref="1">
    <original>S</original>
    <variation>N</variation>
    <location>
        <position position="379"/>
    </location>
</feature>
<dbReference type="EC" id="1.13.11.11" evidence="1"/>
<dbReference type="EMBL" id="AF028834">
    <property type="protein sequence ID" value="AAC24239.1"/>
    <property type="molecule type" value="Genomic_DNA"/>
</dbReference>
<dbReference type="EMBL" id="CH902621">
    <property type="protein sequence ID" value="EDV44673.1"/>
    <property type="molecule type" value="Genomic_DNA"/>
</dbReference>
<dbReference type="SMR" id="B3MQP7"/>
<dbReference type="FunCoup" id="B3MQP7">
    <property type="interactions" value="154"/>
</dbReference>
<dbReference type="STRING" id="7217.B3MQP7"/>
<dbReference type="EnsemblMetazoa" id="FBtr0125176">
    <property type="protein sequence ID" value="FBpp0123668"/>
    <property type="gene ID" value="FBgn0014630"/>
</dbReference>
<dbReference type="EnsemblMetazoa" id="XM_001963561.4">
    <property type="protein sequence ID" value="XP_001963597.1"/>
    <property type="gene ID" value="LOC6508747"/>
</dbReference>
<dbReference type="GeneID" id="6508747"/>
<dbReference type="KEGG" id="dan:6508747"/>
<dbReference type="CTD" id="136040130"/>
<dbReference type="eggNOG" id="KOG3906">
    <property type="taxonomic scope" value="Eukaryota"/>
</dbReference>
<dbReference type="HOGENOM" id="CLU_045599_1_1_1"/>
<dbReference type="InParanoid" id="B3MQP7"/>
<dbReference type="OMA" id="WRWRNDH"/>
<dbReference type="OrthoDB" id="447477at2759"/>
<dbReference type="PhylomeDB" id="B3MQP7"/>
<dbReference type="UniPathway" id="UPA00271"/>
<dbReference type="UniPathway" id="UPA00333">
    <property type="reaction ID" value="UER00453"/>
</dbReference>
<dbReference type="Proteomes" id="UP000007801">
    <property type="component" value="Unassembled WGS sequence"/>
</dbReference>
<dbReference type="GO" id="GO:0020037">
    <property type="term" value="F:heme binding"/>
    <property type="evidence" value="ECO:0000250"/>
    <property type="project" value="UniProtKB"/>
</dbReference>
<dbReference type="GO" id="GO:0046872">
    <property type="term" value="F:metal ion binding"/>
    <property type="evidence" value="ECO:0007669"/>
    <property type="project" value="UniProtKB-KW"/>
</dbReference>
<dbReference type="GO" id="GO:0004833">
    <property type="term" value="F:tryptophan 2,3-dioxygenase activity"/>
    <property type="evidence" value="ECO:0000250"/>
    <property type="project" value="UniProtKB"/>
</dbReference>
<dbReference type="GO" id="GO:0019442">
    <property type="term" value="P:L-tryptophan catabolic process to acetyl-CoA"/>
    <property type="evidence" value="ECO:0007669"/>
    <property type="project" value="TreeGrafter"/>
</dbReference>
<dbReference type="GO" id="GO:0019441">
    <property type="term" value="P:L-tryptophan catabolic process to kynurenine"/>
    <property type="evidence" value="ECO:0000250"/>
    <property type="project" value="UniProtKB"/>
</dbReference>
<dbReference type="GO" id="GO:0006727">
    <property type="term" value="P:ommochrome biosynthetic process"/>
    <property type="evidence" value="ECO:0007669"/>
    <property type="project" value="UniProtKB-UniRule"/>
</dbReference>
<dbReference type="GO" id="GO:0051289">
    <property type="term" value="P:protein homotetramerization"/>
    <property type="evidence" value="ECO:0007669"/>
    <property type="project" value="EnsemblMetazoa"/>
</dbReference>
<dbReference type="FunFam" id="1.10.287.3810:FF:000001">
    <property type="entry name" value="Tryptophan 2,3-dioxygenase"/>
    <property type="match status" value="1"/>
</dbReference>
<dbReference type="Gene3D" id="1.10.287.3810">
    <property type="match status" value="1"/>
</dbReference>
<dbReference type="Gene3D" id="1.20.58.480">
    <property type="match status" value="1"/>
</dbReference>
<dbReference type="HAMAP" id="MF_01972">
    <property type="entry name" value="T23O"/>
    <property type="match status" value="1"/>
</dbReference>
<dbReference type="InterPro" id="IPR037217">
    <property type="entry name" value="Trp/Indoleamine_2_3_dOase-like"/>
</dbReference>
<dbReference type="InterPro" id="IPR004981">
    <property type="entry name" value="Trp_2_3_dOase"/>
</dbReference>
<dbReference type="PANTHER" id="PTHR10138">
    <property type="entry name" value="TRYPTOPHAN 2,3-DIOXYGENASE"/>
    <property type="match status" value="1"/>
</dbReference>
<dbReference type="PANTHER" id="PTHR10138:SF0">
    <property type="entry name" value="TRYPTOPHAN 2,3-DIOXYGENASE"/>
    <property type="match status" value="1"/>
</dbReference>
<dbReference type="Pfam" id="PF03301">
    <property type="entry name" value="Trp_dioxygenase"/>
    <property type="match status" value="1"/>
</dbReference>
<dbReference type="SUPFAM" id="SSF140959">
    <property type="entry name" value="Indolic compounds 2,3-dioxygenase-like"/>
    <property type="match status" value="1"/>
</dbReference>
<organism>
    <name type="scientific">Drosophila ananassae</name>
    <name type="common">Fruit fly</name>
    <dbReference type="NCBI Taxonomy" id="7217"/>
    <lineage>
        <taxon>Eukaryota</taxon>
        <taxon>Metazoa</taxon>
        <taxon>Ecdysozoa</taxon>
        <taxon>Arthropoda</taxon>
        <taxon>Hexapoda</taxon>
        <taxon>Insecta</taxon>
        <taxon>Pterygota</taxon>
        <taxon>Neoptera</taxon>
        <taxon>Endopterygota</taxon>
        <taxon>Diptera</taxon>
        <taxon>Brachycera</taxon>
        <taxon>Muscomorpha</taxon>
        <taxon>Ephydroidea</taxon>
        <taxon>Drosophilidae</taxon>
        <taxon>Drosophila</taxon>
        <taxon>Sophophora</taxon>
    </lineage>
</organism>
<protein>
    <recommendedName>
        <fullName evidence="1">Tryptophan 2,3-dioxygenase</fullName>
        <shortName evidence="1">TDO</shortName>
        <ecNumber evidence="1">1.13.11.11</ecNumber>
    </recommendedName>
    <alternativeName>
        <fullName evidence="1">Protein vermilion</fullName>
    </alternativeName>
    <alternativeName>
        <fullName evidence="1">Tryptamin 2,3-dioxygenase</fullName>
    </alternativeName>
    <alternativeName>
        <fullName evidence="1">Tryptophan oxygenase</fullName>
        <shortName evidence="1">TO</shortName>
        <shortName evidence="1">TRPO</shortName>
    </alternativeName>
    <alternativeName>
        <fullName evidence="1">Tryptophan pyrrolase</fullName>
    </alternativeName>
    <alternativeName>
        <fullName evidence="1">Tryptophanase</fullName>
    </alternativeName>
</protein>
<reference key="1">
    <citation type="journal article" date="1998" name="Proc. Natl. Acad. Sci. U.S.A.">
        <title>A test of the background selection hypothesis based on nucleotide data from Drosophila ananassae.</title>
        <authorList>
            <person name="Stephan W."/>
            <person name="Xing L."/>
            <person name="Kirby D.A."/>
            <person name="Braverman J.M."/>
        </authorList>
    </citation>
    <scope>NUCLEOTIDE SEQUENCE [GENOMIC DNA]</scope>
</reference>
<reference key="2">
    <citation type="journal article" date="2007" name="Nature">
        <title>Evolution of genes and genomes on the Drosophila phylogeny.</title>
        <authorList>
            <consortium name="Drosophila 12 genomes consortium"/>
        </authorList>
    </citation>
    <scope>NUCLEOTIDE SEQUENCE [LARGE SCALE GENOMIC DNA]</scope>
    <source>
        <strain>Tucson 14024-0371.13</strain>
    </source>
</reference>
<keyword id="KW-0223">Dioxygenase</keyword>
<keyword id="KW-0349">Heme</keyword>
<keyword id="KW-0408">Iron</keyword>
<keyword id="KW-0479">Metal-binding</keyword>
<keyword id="KW-0560">Oxidoreductase</keyword>
<keyword id="KW-1185">Reference proteome</keyword>
<keyword id="KW-0823">Tryptophan catabolism</keyword>
<gene>
    <name evidence="1" type="primary">v</name>
    <name type="ORF">GF20476</name>
</gene>
<accession>B3MQP7</accession>
<accession>O17440</accession>
<proteinExistence type="inferred from homology"/>
<sequence length="380" mass="44343">MSCPYAGSGNDHDDAAVPLSTEVGKIYGEYLMLDKLLDAQCMLSKEDKRPVHDEHLFIITHQAYELWFKQIIFEFDSIRDMLDAEVIDETKTLEIVKRLNRVVLILKLLVDQVPILETMTPLDFMDFRKYLAPASGFQSLQFRLIENKLGVLTEQRVRYNQKYSDVFGGDEDALTAIRSSEQEPSLLELVQRWLERTPGLEESGFNFWEKFQQSVDKFLEAQVHSAMEEPVERAKNYRLMDIEKRREVYRSIFDPAVHDALVRRGDRRFSHRALQGAIMITFYRDEPRFSQPHQLLTLLMDIDSLITKWRYNHVIMVQRMIGSQQLGTGGSSGYQYLRSTLSDRYKVFLDLFNLSTFLIPREAIPPLDESIRKKLINKSV</sequence>